<protein>
    <recommendedName>
        <fullName evidence="3">Catechol O-methyltransferase</fullName>
        <shortName evidence="3">COMT</shortName>
        <shortName evidence="3">Catechol OMT</shortName>
        <ecNumber evidence="2">2.1.1.6</ecNumber>
    </recommendedName>
    <alternativeName>
        <fullName evidence="3">NkCOMT</fullName>
    </alternativeName>
</protein>
<dbReference type="EC" id="2.1.1.6" evidence="2"/>
<dbReference type="EMBL" id="CP003178">
    <property type="protein sequence ID" value="AEV96823.1"/>
    <property type="molecule type" value="Genomic_DNA"/>
</dbReference>
<dbReference type="RefSeq" id="WP_014216737.1">
    <property type="nucleotide sequence ID" value="NC_016609.1"/>
</dbReference>
<dbReference type="PDB" id="7CVU">
    <property type="method" value="X-ray"/>
    <property type="resolution" value="1.75 A"/>
    <property type="chains" value="A/B/C/D=1-221"/>
</dbReference>
<dbReference type="PDB" id="7CVV">
    <property type="method" value="X-ray"/>
    <property type="resolution" value="2.52 A"/>
    <property type="chains" value="A/B/C=1-221"/>
</dbReference>
<dbReference type="PDB" id="7CVW">
    <property type="method" value="X-ray"/>
    <property type="resolution" value="1.54 A"/>
    <property type="chains" value="A/B=1-221"/>
</dbReference>
<dbReference type="PDB" id="7CVX">
    <property type="method" value="X-ray"/>
    <property type="resolution" value="1.70 A"/>
    <property type="chains" value="A/B=1-221"/>
</dbReference>
<dbReference type="PDBsum" id="7CVU"/>
<dbReference type="PDBsum" id="7CVV"/>
<dbReference type="PDBsum" id="7CVW"/>
<dbReference type="PDBsum" id="7CVX"/>
<dbReference type="SMR" id="G8T6H8"/>
<dbReference type="STRING" id="700598.Niako_0425"/>
<dbReference type="KEGG" id="nko:Niako_0425"/>
<dbReference type="PATRIC" id="fig|700598.3.peg.441"/>
<dbReference type="eggNOG" id="COG4122">
    <property type="taxonomic scope" value="Bacteria"/>
</dbReference>
<dbReference type="HOGENOM" id="CLU_067676_8_0_10"/>
<dbReference type="OrthoDB" id="9799672at2"/>
<dbReference type="Proteomes" id="UP000005438">
    <property type="component" value="Chromosome"/>
</dbReference>
<dbReference type="GO" id="GO:0046872">
    <property type="term" value="F:metal ion binding"/>
    <property type="evidence" value="ECO:0007669"/>
    <property type="project" value="UniProtKB-KW"/>
</dbReference>
<dbReference type="GO" id="GO:0008171">
    <property type="term" value="F:O-methyltransferase activity"/>
    <property type="evidence" value="ECO:0007669"/>
    <property type="project" value="InterPro"/>
</dbReference>
<dbReference type="GO" id="GO:0008757">
    <property type="term" value="F:S-adenosylmethionine-dependent methyltransferase activity"/>
    <property type="evidence" value="ECO:0007669"/>
    <property type="project" value="TreeGrafter"/>
</dbReference>
<dbReference type="GO" id="GO:0032259">
    <property type="term" value="P:methylation"/>
    <property type="evidence" value="ECO:0007669"/>
    <property type="project" value="UniProtKB-KW"/>
</dbReference>
<dbReference type="CDD" id="cd02440">
    <property type="entry name" value="AdoMet_MTases"/>
    <property type="match status" value="1"/>
</dbReference>
<dbReference type="Gene3D" id="3.40.50.150">
    <property type="entry name" value="Vaccinia Virus protein VP39"/>
    <property type="match status" value="1"/>
</dbReference>
<dbReference type="InterPro" id="IPR050362">
    <property type="entry name" value="Cation-dep_OMT"/>
</dbReference>
<dbReference type="InterPro" id="IPR029063">
    <property type="entry name" value="SAM-dependent_MTases_sf"/>
</dbReference>
<dbReference type="InterPro" id="IPR002935">
    <property type="entry name" value="SAM_O-MeTrfase"/>
</dbReference>
<dbReference type="PANTHER" id="PTHR10509:SF14">
    <property type="entry name" value="CAFFEOYL-COA O-METHYLTRANSFERASE 3-RELATED"/>
    <property type="match status" value="1"/>
</dbReference>
<dbReference type="PANTHER" id="PTHR10509">
    <property type="entry name" value="O-METHYLTRANSFERASE-RELATED"/>
    <property type="match status" value="1"/>
</dbReference>
<dbReference type="Pfam" id="PF01596">
    <property type="entry name" value="Methyltransf_3"/>
    <property type="match status" value="1"/>
</dbReference>
<dbReference type="SUPFAM" id="SSF53335">
    <property type="entry name" value="S-adenosyl-L-methionine-dependent methyltransferases"/>
    <property type="match status" value="1"/>
</dbReference>
<dbReference type="PROSITE" id="PS51682">
    <property type="entry name" value="SAM_OMT_I"/>
    <property type="match status" value="1"/>
</dbReference>
<comment type="function">
    <text evidence="2">Catechol O-methyltransferase that can use various catechol-like compounds (PubMed:33596655). Can produce vanillic acid (meta-form) and iso-vanillic acid (para-form) from protocatechuic acid (PCA) (PubMed:33596655). Does not have a regiospecificity, and produces the meta- and para-forms of the products in equal proportion (PubMed:33596655).</text>
</comment>
<comment type="catalytic activity">
    <reaction evidence="2">
        <text>a catechol + S-adenosyl-L-methionine = a guaiacol + S-adenosyl-L-homocysteine + H(+)</text>
        <dbReference type="Rhea" id="RHEA:17877"/>
        <dbReference type="ChEBI" id="CHEBI:15378"/>
        <dbReference type="ChEBI" id="CHEBI:33566"/>
        <dbReference type="ChEBI" id="CHEBI:57856"/>
        <dbReference type="ChEBI" id="CHEBI:59789"/>
        <dbReference type="ChEBI" id="CHEBI:134251"/>
        <dbReference type="EC" id="2.1.1.6"/>
    </reaction>
</comment>
<comment type="cofactor">
    <cofactor evidence="2">
        <name>Mg(2+)</name>
        <dbReference type="ChEBI" id="CHEBI:18420"/>
    </cofactor>
    <text evidence="2">Exhibits highest activity with Mg(2+). Also shows good activity with Zn(2+) and Cu(2+), and lower activity with Co(2+) and Cd(2+).</text>
</comment>
<comment type="activity regulation">
    <text evidence="2">The metal ion affects the meta and para-regiospecificity of the enzyme as well as the enzyme activity and thermal stability.</text>
</comment>
<comment type="subunit">
    <text evidence="2">Homodimer.</text>
</comment>
<comment type="domain">
    <text evidence="2">Undergoes conformational changes upon the binding of S-adenosyl-L-methionine and the metal ion.</text>
</comment>
<comment type="similarity">
    <text evidence="1">Belongs to the class I-like SAM-binding methyltransferase superfamily. Cation-dependent O-methyltransferase family.</text>
</comment>
<sequence length="221" mass="24037">MNNQIFESVDHYISDLLGYEDDALLAATNSLAEAGMPAISVSPNQGKFLQLLAQLCQAKNILELGTLAGYSTIWMARALPKNGRLITLEYDPKHAAVAQKNIDRAGLTSQVQIRTGKAIDILPQLVEEGAGPFDMIFIDADKPPYTEYFQWALRLSRPGTLIVADNVIRDGKVLDENSTEPAVQGARRFNAMLGANTAVDATILQMVGVKEYDGMALAIVK</sequence>
<name>CAMT_NIAKG</name>
<feature type="chain" id="PRO_0000456470" description="Catechol O-methyltransferase">
    <location>
        <begin position="1"/>
        <end position="221"/>
    </location>
</feature>
<feature type="binding site" evidence="2 7 8 9">
    <location>
        <position position="41"/>
    </location>
    <ligand>
        <name>S-adenosyl-L-methionine</name>
        <dbReference type="ChEBI" id="CHEBI:59789"/>
    </ligand>
</feature>
<feature type="binding site" evidence="4 8 9">
    <location>
        <position position="65"/>
    </location>
    <ligand>
        <name>S-adenosyl-L-methionine</name>
        <dbReference type="ChEBI" id="CHEBI:59789"/>
    </ligand>
</feature>
<feature type="binding site" evidence="4 8 9">
    <location>
        <position position="67"/>
    </location>
    <ligand>
        <name>S-adenosyl-L-methionine</name>
        <dbReference type="ChEBI" id="CHEBI:59789"/>
    </ligand>
</feature>
<feature type="binding site" evidence="2 7 8 9">
    <location>
        <position position="71"/>
    </location>
    <ligand>
        <name>S-adenosyl-L-methionine</name>
        <dbReference type="ChEBI" id="CHEBI:59789"/>
    </ligand>
</feature>
<feature type="binding site" evidence="2 7 8 9">
    <location>
        <position position="89"/>
    </location>
    <ligand>
        <name>S-adenosyl-L-methionine</name>
        <dbReference type="ChEBI" id="CHEBI:59789"/>
    </ligand>
</feature>
<feature type="binding site" evidence="2 7 8 9">
    <location>
        <position position="94"/>
    </location>
    <ligand>
        <name>S-adenosyl-L-methionine</name>
        <dbReference type="ChEBI" id="CHEBI:59789"/>
    </ligand>
</feature>
<feature type="binding site" evidence="2 7 8 9">
    <location>
        <position position="118"/>
    </location>
    <ligand>
        <name>S-adenosyl-L-methionine</name>
        <dbReference type="ChEBI" id="CHEBI:59789"/>
    </ligand>
</feature>
<feature type="binding site" evidence="2 8 9">
    <location>
        <position position="139"/>
    </location>
    <ligand>
        <name>Mg(2+)</name>
        <dbReference type="ChEBI" id="CHEBI:18420"/>
    </ligand>
</feature>
<feature type="binding site" evidence="2 7 9">
    <location>
        <position position="139"/>
    </location>
    <ligand>
        <name>S-adenosyl-L-methionine</name>
        <dbReference type="ChEBI" id="CHEBI:59789"/>
    </ligand>
</feature>
<feature type="binding site" evidence="2 8 9">
    <location>
        <position position="165"/>
    </location>
    <ligand>
        <name>Mg(2+)</name>
        <dbReference type="ChEBI" id="CHEBI:18420"/>
    </ligand>
</feature>
<feature type="binding site" evidence="2 8 9">
    <location>
        <position position="166"/>
    </location>
    <ligand>
        <name>Mg(2+)</name>
        <dbReference type="ChEBI" id="CHEBI:18420"/>
    </ligand>
</feature>
<feature type="mutagenesis site" description="Shows 20% increase in activity and enhanced regiospecificity against the para-form of the product." evidence="2">
    <original>E</original>
    <variation>K</variation>
    <location>
        <position position="211"/>
    </location>
</feature>
<feature type="mutagenesis site" description="Shows 50% increase in activity and enhanced regiospecificity against the para-form of the product." evidence="2">
    <original>E</original>
    <variation>R</variation>
    <location>
        <position position="211"/>
    </location>
</feature>
<feature type="helix" evidence="10">
    <location>
        <begin position="4"/>
        <end position="17"/>
    </location>
</feature>
<feature type="helix" evidence="10">
    <location>
        <begin position="22"/>
        <end position="34"/>
    </location>
</feature>
<feature type="helix" evidence="10">
    <location>
        <begin position="43"/>
        <end position="55"/>
    </location>
</feature>
<feature type="strand" evidence="10">
    <location>
        <begin position="59"/>
        <end position="64"/>
    </location>
</feature>
<feature type="helix" evidence="10">
    <location>
        <begin position="70"/>
        <end position="76"/>
    </location>
</feature>
<feature type="strand" evidence="10">
    <location>
        <begin position="84"/>
        <end position="90"/>
    </location>
</feature>
<feature type="helix" evidence="10">
    <location>
        <begin position="92"/>
        <end position="104"/>
    </location>
</feature>
<feature type="turn" evidence="10">
    <location>
        <begin position="108"/>
        <end position="110"/>
    </location>
</feature>
<feature type="strand" evidence="10">
    <location>
        <begin position="111"/>
        <end position="116"/>
    </location>
</feature>
<feature type="helix" evidence="10">
    <location>
        <begin position="118"/>
        <end position="128"/>
    </location>
</feature>
<feature type="strand" evidence="10">
    <location>
        <begin position="133"/>
        <end position="138"/>
    </location>
</feature>
<feature type="helix" evidence="10">
    <location>
        <begin position="145"/>
        <end position="154"/>
    </location>
</feature>
<feature type="strand" evidence="10">
    <location>
        <begin position="156"/>
        <end position="165"/>
    </location>
</feature>
<feature type="helix" evidence="10">
    <location>
        <begin position="169"/>
        <end position="174"/>
    </location>
</feature>
<feature type="helix" evidence="10">
    <location>
        <begin position="181"/>
        <end position="195"/>
    </location>
</feature>
<feature type="strand" evidence="10">
    <location>
        <begin position="197"/>
        <end position="206"/>
    </location>
</feature>
<feature type="strand" evidence="10">
    <location>
        <begin position="208"/>
        <end position="210"/>
    </location>
</feature>
<feature type="strand" evidence="10">
    <location>
        <begin position="212"/>
        <end position="220"/>
    </location>
</feature>
<proteinExistence type="evidence at protein level"/>
<accession>G8T6H8</accession>
<reference key="1">
    <citation type="submission" date="2011-12" db="EMBL/GenBank/DDBJ databases">
        <title>The complete genome of Niastella koreensis GR20-10.</title>
        <authorList>
            <consortium name="US DOE Joint Genome Institute (JGI-PGF)"/>
            <person name="Lucas S."/>
            <person name="Han J."/>
            <person name="Lapidus A."/>
            <person name="Bruce D."/>
            <person name="Goodwin L."/>
            <person name="Pitluck S."/>
            <person name="Peters L."/>
            <person name="Kyrpides N."/>
            <person name="Mavromatis K."/>
            <person name="Ivanova N."/>
            <person name="Mikhailova N."/>
            <person name="Davenport K."/>
            <person name="Saunders E."/>
            <person name="Detter J.C."/>
            <person name="Tapia R."/>
            <person name="Han C."/>
            <person name="Land M."/>
            <person name="Hauser L."/>
            <person name="Markowitz V."/>
            <person name="Cheng J.-F."/>
            <person name="Hugenholtz P."/>
            <person name="Woyke T."/>
            <person name="Wu D."/>
            <person name="Tindall B."/>
            <person name="Pomrenke H."/>
            <person name="Brambilla E."/>
            <person name="Klenk H.-P."/>
            <person name="Eisen J.A."/>
        </authorList>
    </citation>
    <scope>NUCLEOTIDE SEQUENCE [LARGE SCALE GENOMIC DNA]</scope>
    <source>
        <strain>DSM 17620 / KACC 11465 / NBRC 106392 / GR20-10</strain>
    </source>
</reference>
<reference evidence="6 7 8 9" key="2">
    <citation type="journal article" date="2021" name="J. Agric. Food Chem.">
        <title>Crystal structure and regiospecificity of catechol o-methyltransferase from Niastella koreensis.</title>
        <authorList>
            <person name="Lee S.H."/>
            <person name="Kim B."/>
            <person name="Kim K.J."/>
        </authorList>
    </citation>
    <scope>X-RAY CRYSTALLOGRAPHY (1.54 ANGSTROMS) OF APOENZYME AND IN COMPLEXES WITH S-ADENOSYL-L-METHIONINE; S-ADENOSYL-L-HOMOCYSTEINE AND MAGNESIUM</scope>
    <scope>FUNCTION</scope>
    <scope>CATALYTIC ACTIVITY</scope>
    <scope>COFACTOR</scope>
    <scope>ACTIVITY REGULATION</scope>
    <scope>SUBUNIT</scope>
    <scope>DOMAIN</scope>
    <scope>MUTAGENESIS OF GLU-211</scope>
</reference>
<evidence type="ECO:0000255" key="1">
    <source>
        <dbReference type="PROSITE-ProRule" id="PRU01019"/>
    </source>
</evidence>
<evidence type="ECO:0000269" key="2">
    <source>
    </source>
</evidence>
<evidence type="ECO:0000303" key="3">
    <source>
    </source>
</evidence>
<evidence type="ECO:0000305" key="4">
    <source>
    </source>
</evidence>
<evidence type="ECO:0000312" key="5">
    <source>
        <dbReference type="EMBL" id="AEV96823.1"/>
    </source>
</evidence>
<evidence type="ECO:0007744" key="6">
    <source>
        <dbReference type="PDB" id="7CVU"/>
    </source>
</evidence>
<evidence type="ECO:0007744" key="7">
    <source>
        <dbReference type="PDB" id="7CVV"/>
    </source>
</evidence>
<evidence type="ECO:0007744" key="8">
    <source>
        <dbReference type="PDB" id="7CVW"/>
    </source>
</evidence>
<evidence type="ECO:0007744" key="9">
    <source>
        <dbReference type="PDB" id="7CVX"/>
    </source>
</evidence>
<evidence type="ECO:0007829" key="10">
    <source>
        <dbReference type="PDB" id="7CVW"/>
    </source>
</evidence>
<gene>
    <name evidence="5" type="ordered locus">Niako_0425</name>
</gene>
<organism>
    <name type="scientific">Niastella koreensis (strain DSM 17620 / KACC 11465 / NBRC 106392 / GR20-10)</name>
    <dbReference type="NCBI Taxonomy" id="700598"/>
    <lineage>
        <taxon>Bacteria</taxon>
        <taxon>Pseudomonadati</taxon>
        <taxon>Bacteroidota</taxon>
        <taxon>Chitinophagia</taxon>
        <taxon>Chitinophagales</taxon>
        <taxon>Chitinophagaceae</taxon>
        <taxon>Niastella</taxon>
    </lineage>
</organism>
<keyword id="KW-0002">3D-structure</keyword>
<keyword id="KW-0460">Magnesium</keyword>
<keyword id="KW-0479">Metal-binding</keyword>
<keyword id="KW-0489">Methyltransferase</keyword>
<keyword id="KW-0949">S-adenosyl-L-methionine</keyword>
<keyword id="KW-0808">Transferase</keyword>